<protein>
    <recommendedName>
        <fullName>Iron-sulfur cluster assembly SufBD family protein MJ0034</fullName>
    </recommendedName>
</protein>
<dbReference type="EMBL" id="L77117">
    <property type="protein sequence ID" value="AAB98015.1"/>
    <property type="molecule type" value="Genomic_DNA"/>
</dbReference>
<dbReference type="PIR" id="B64304">
    <property type="entry name" value="B64304"/>
</dbReference>
<dbReference type="RefSeq" id="WP_010869525.1">
    <property type="nucleotide sequence ID" value="NC_000909.1"/>
</dbReference>
<dbReference type="SMR" id="Q60349"/>
<dbReference type="FunCoup" id="Q60349">
    <property type="interactions" value="4"/>
</dbReference>
<dbReference type="STRING" id="243232.MJ_0034"/>
<dbReference type="PaxDb" id="243232-MJ_0034"/>
<dbReference type="EnsemblBacteria" id="AAB98015">
    <property type="protein sequence ID" value="AAB98015"/>
    <property type="gene ID" value="MJ_0034"/>
</dbReference>
<dbReference type="GeneID" id="1450872"/>
<dbReference type="KEGG" id="mja:MJ_0034"/>
<dbReference type="eggNOG" id="arCOG01716">
    <property type="taxonomic scope" value="Archaea"/>
</dbReference>
<dbReference type="HOGENOM" id="CLU_894122_0_0_2"/>
<dbReference type="InParanoid" id="Q60349"/>
<dbReference type="OrthoDB" id="372168at2157"/>
<dbReference type="PhylomeDB" id="Q60349"/>
<dbReference type="Proteomes" id="UP000000805">
    <property type="component" value="Chromosome"/>
</dbReference>
<dbReference type="GO" id="GO:0016226">
    <property type="term" value="P:iron-sulfur cluster assembly"/>
    <property type="evidence" value="ECO:0007669"/>
    <property type="project" value="InterPro"/>
</dbReference>
<dbReference type="InterPro" id="IPR055346">
    <property type="entry name" value="Fe-S_cluster_assembly_SufBD"/>
</dbReference>
<dbReference type="InterPro" id="IPR000825">
    <property type="entry name" value="SUF_FeS_clus_asmbl_SufBD_core"/>
</dbReference>
<dbReference type="InterPro" id="IPR037284">
    <property type="entry name" value="SUF_FeS_clus_asmbl_SufBD_sf"/>
</dbReference>
<dbReference type="PANTHER" id="PTHR30508">
    <property type="entry name" value="FES CLUSTER ASSEMBLY PROTEIN SUF"/>
    <property type="match status" value="1"/>
</dbReference>
<dbReference type="PANTHER" id="PTHR30508:SF6">
    <property type="entry name" value="UPF0051 PROTEIN MJ0034"/>
    <property type="match status" value="1"/>
</dbReference>
<dbReference type="Pfam" id="PF01458">
    <property type="entry name" value="SUFBD_core"/>
    <property type="match status" value="1"/>
</dbReference>
<dbReference type="SUPFAM" id="SSF101960">
    <property type="entry name" value="Stabilizer of iron transporter SufD"/>
    <property type="match status" value="1"/>
</dbReference>
<reference key="1">
    <citation type="journal article" date="1996" name="Science">
        <title>Complete genome sequence of the methanogenic archaeon, Methanococcus jannaschii.</title>
        <authorList>
            <person name="Bult C.J."/>
            <person name="White O."/>
            <person name="Olsen G.J."/>
            <person name="Zhou L."/>
            <person name="Fleischmann R.D."/>
            <person name="Sutton G.G."/>
            <person name="Blake J.A."/>
            <person name="FitzGerald L.M."/>
            <person name="Clayton R.A."/>
            <person name="Gocayne J.D."/>
            <person name="Kerlavage A.R."/>
            <person name="Dougherty B.A."/>
            <person name="Tomb J.-F."/>
            <person name="Adams M.D."/>
            <person name="Reich C.I."/>
            <person name="Overbeek R."/>
            <person name="Kirkness E.F."/>
            <person name="Weinstock K.G."/>
            <person name="Merrick J.M."/>
            <person name="Glodek A."/>
            <person name="Scott J.L."/>
            <person name="Geoghagen N.S.M."/>
            <person name="Weidman J.F."/>
            <person name="Fuhrmann J.L."/>
            <person name="Nguyen D."/>
            <person name="Utterback T.R."/>
            <person name="Kelley J.M."/>
            <person name="Peterson J.D."/>
            <person name="Sadow P.W."/>
            <person name="Hanna M.C."/>
            <person name="Cotton M.D."/>
            <person name="Roberts K.M."/>
            <person name="Hurst M.A."/>
            <person name="Kaine B.P."/>
            <person name="Borodovsky M."/>
            <person name="Klenk H.-P."/>
            <person name="Fraser C.M."/>
            <person name="Smith H.O."/>
            <person name="Woese C.R."/>
            <person name="Venter J.C."/>
        </authorList>
    </citation>
    <scope>NUCLEOTIDE SEQUENCE [LARGE SCALE GENOMIC DNA]</scope>
    <source>
        <strain>ATCC 43067 / DSM 2661 / JAL-1 / JCM 10045 / NBRC 100440</strain>
    </source>
</reference>
<proteinExistence type="inferred from homology"/>
<gene>
    <name type="ordered locus">MJ0034</name>
</gene>
<comment type="similarity">
    <text evidence="1">Belongs to the iron-sulfur cluster assembly SufBD family.</text>
</comment>
<keyword id="KW-1185">Reference proteome</keyword>
<feature type="chain" id="PRO_0000147379" description="Iron-sulfur cluster assembly SufBD family protein MJ0034">
    <location>
        <begin position="1"/>
        <end position="316"/>
    </location>
</feature>
<sequence>MSIKEELMEIIEAIKYTSEKPEEIVHGKGPRIIVKESRIIDVQGDEGIILEGKEEDGKIKAKIIVKKGYKFKYPIHMCFGITEENISQIIDVEIILEEDSSISLMSHCSFPKGKGIKHIMNGIIKIGKNAKFSYNEFHYHGMDGDILVKPTVKVEIDEGGIYISNFTLTKGRIGTLDIEQEIIAKKDAIIDITTRTYAIKEDVVKVNEVVKLNGENAKCIIKSRGAAMDNSKISLKLKIEGNAPYSKGHIDCAEIVKGNAEVESIPIVVVRDDKARITHEAAIGSVDKKQLETLMAKGLDEDEATEIIVKGMIGDL</sequence>
<name>Y034_METJA</name>
<organism>
    <name type="scientific">Methanocaldococcus jannaschii (strain ATCC 43067 / DSM 2661 / JAL-1 / JCM 10045 / NBRC 100440)</name>
    <name type="common">Methanococcus jannaschii</name>
    <dbReference type="NCBI Taxonomy" id="243232"/>
    <lineage>
        <taxon>Archaea</taxon>
        <taxon>Methanobacteriati</taxon>
        <taxon>Methanobacteriota</taxon>
        <taxon>Methanomada group</taxon>
        <taxon>Methanococci</taxon>
        <taxon>Methanococcales</taxon>
        <taxon>Methanocaldococcaceae</taxon>
        <taxon>Methanocaldococcus</taxon>
    </lineage>
</organism>
<accession>Q60349</accession>
<evidence type="ECO:0000305" key="1"/>